<name>PHCY_LIODE</name>
<protein>
    <recommendedName>
        <fullName>Pseudohemocyanin</fullName>
    </recommendedName>
</protein>
<sequence length="12" mass="1350">DEPDGVPTHQKQ</sequence>
<evidence type="ECO:0000250" key="1">
    <source>
        <dbReference type="UniProtKB" id="Q6KF81"/>
    </source>
</evidence>
<evidence type="ECO:0000250" key="2">
    <source>
        <dbReference type="UniProtKB" id="Q6KF82"/>
    </source>
</evidence>
<evidence type="ECO:0000269" key="3">
    <source ref="1"/>
</evidence>
<evidence type="ECO:0000303" key="4">
    <source ref="1"/>
</evidence>
<evidence type="ECO:0000305" key="5"/>
<feature type="chain" id="PRO_0000204280" description="Pseudohemocyanin">
    <location>
        <begin position="1"/>
        <end position="12" status="greater than"/>
    </location>
</feature>
<feature type="non-terminal residue" evidence="4">
    <location>
        <position position="12"/>
    </location>
</feature>
<keyword id="KW-0903">Direct protein sequencing</keyword>
<organism>
    <name type="scientific">Liocarcinus depurator</name>
    <name type="common">Harbour crab</name>
    <name type="synonym">Portunus depurator</name>
    <dbReference type="NCBI Taxonomy" id="313354"/>
    <lineage>
        <taxon>Eukaryota</taxon>
        <taxon>Metazoa</taxon>
        <taxon>Ecdysozoa</taxon>
        <taxon>Arthropoda</taxon>
        <taxon>Crustacea</taxon>
        <taxon>Multicrustacea</taxon>
        <taxon>Malacostraca</taxon>
        <taxon>Eumalacostraca</taxon>
        <taxon>Eucarida</taxon>
        <taxon>Decapoda</taxon>
        <taxon>Pleocyemata</taxon>
        <taxon>Brachyura</taxon>
        <taxon>Eubrachyura</taxon>
        <taxon>Portunoidea</taxon>
        <taxon>Polybiidae</taxon>
        <taxon>Liocarcinus</taxon>
    </lineage>
</organism>
<reference evidence="5" key="1">
    <citation type="journal article" date="2007" name="Mar. Biol.">
        <title>Structural and functional heterogeneity of hemocyanin: intra- and inter-specific comparison in four species of portunid crabs (Crustacea: Portunidae).</title>
        <authorList>
            <person name="Giomi F."/>
            <person name="Raicevich S."/>
            <person name="Ferrarese A."/>
            <person name="Pranovi F."/>
            <person name="Di Muro P."/>
            <person name="Beltramin K."/>
        </authorList>
    </citation>
    <scope>PROTEIN SEQUENCE</scope>
    <scope>TISSUE SPECIFICITY</scope>
    <source>
        <tissue evidence="3">Hemolymph</tissue>
    </source>
</reference>
<proteinExistence type="evidence at protein level"/>
<accession>P84460</accession>
<dbReference type="GO" id="GO:0005615">
    <property type="term" value="C:extracellular space"/>
    <property type="evidence" value="ECO:0000314"/>
    <property type="project" value="UniProtKB"/>
</dbReference>
<comment type="function">
    <text evidence="2">Does not function as a hemocyanin.</text>
</comment>
<comment type="subunit">
    <text evidence="1">Hexamer.</text>
</comment>
<comment type="tissue specificity">
    <text evidence="3">Hemolymph.</text>
</comment>
<comment type="similarity">
    <text evidence="5">Belongs to the tyrosinase family. Hemocyanin subfamily.</text>
</comment>